<feature type="chain" id="PRO_0000313821" description="Proton channel OTOP2">
    <location>
        <begin position="1"/>
        <end position="563"/>
    </location>
</feature>
<feature type="transmembrane region" description="Helical" evidence="2">
    <location>
        <begin position="30"/>
        <end position="50"/>
    </location>
</feature>
<feature type="transmembrane region" description="Helical" evidence="2">
    <location>
        <begin position="62"/>
        <end position="82"/>
    </location>
</feature>
<feature type="transmembrane region" description="Helical" evidence="2">
    <location>
        <begin position="100"/>
        <end position="120"/>
    </location>
</feature>
<feature type="transmembrane region" description="Helical" evidence="2">
    <location>
        <begin position="137"/>
        <end position="157"/>
    </location>
</feature>
<feature type="transmembrane region" description="Helical" evidence="2">
    <location>
        <begin position="173"/>
        <end position="193"/>
    </location>
</feature>
<feature type="transmembrane region" description="Helical" evidence="2">
    <location>
        <begin position="242"/>
        <end position="262"/>
    </location>
</feature>
<feature type="transmembrane region" description="Helical" evidence="2">
    <location>
        <begin position="290"/>
        <end position="310"/>
    </location>
</feature>
<feature type="transmembrane region" description="Helical" evidence="2">
    <location>
        <begin position="325"/>
        <end position="345"/>
    </location>
</feature>
<feature type="transmembrane region" description="Helical" evidence="2">
    <location>
        <begin position="373"/>
        <end position="393"/>
    </location>
</feature>
<feature type="transmembrane region" description="Helical" evidence="2">
    <location>
        <begin position="403"/>
        <end position="423"/>
    </location>
</feature>
<feature type="transmembrane region" description="Helical" evidence="2">
    <location>
        <begin position="496"/>
        <end position="516"/>
    </location>
</feature>
<feature type="transmembrane region" description="Helical" evidence="2">
    <location>
        <begin position="528"/>
        <end position="548"/>
    </location>
</feature>
<feature type="region of interest" description="Disordered" evidence="3">
    <location>
        <begin position="1"/>
        <end position="20"/>
    </location>
</feature>
<feature type="sequence conflict" description="In Ref. 3; BAC26159." evidence="8" ref="3">
    <original>S</original>
    <variation>T</variation>
    <location>
        <position position="198"/>
    </location>
</feature>
<feature type="helix" evidence="10">
    <location>
        <begin position="29"/>
        <end position="52"/>
    </location>
</feature>
<feature type="helix" evidence="10">
    <location>
        <begin position="60"/>
        <end position="84"/>
    </location>
</feature>
<feature type="helix" evidence="10">
    <location>
        <begin position="102"/>
        <end position="127"/>
    </location>
</feature>
<feature type="strand" evidence="11">
    <location>
        <begin position="130"/>
        <end position="132"/>
    </location>
</feature>
<feature type="helix" evidence="10">
    <location>
        <begin position="135"/>
        <end position="155"/>
    </location>
</feature>
<feature type="helix" evidence="10">
    <location>
        <begin position="166"/>
        <end position="193"/>
    </location>
</feature>
<feature type="helix" evidence="10">
    <location>
        <begin position="248"/>
        <end position="264"/>
    </location>
</feature>
<feature type="turn" evidence="10">
    <location>
        <begin position="265"/>
        <end position="267"/>
    </location>
</feature>
<feature type="helix" evidence="10">
    <location>
        <begin position="293"/>
        <end position="311"/>
    </location>
</feature>
<feature type="helix" evidence="10">
    <location>
        <begin position="323"/>
        <end position="352"/>
    </location>
</feature>
<feature type="helix" evidence="10">
    <location>
        <begin position="367"/>
        <end position="392"/>
    </location>
</feature>
<feature type="helix" evidence="10">
    <location>
        <begin position="399"/>
        <end position="428"/>
    </location>
</feature>
<feature type="helix" evidence="10">
    <location>
        <begin position="488"/>
        <end position="507"/>
    </location>
</feature>
<feature type="helix" evidence="10">
    <location>
        <begin position="510"/>
        <end position="514"/>
    </location>
</feature>
<feature type="helix" evidence="10">
    <location>
        <begin position="523"/>
        <end position="529"/>
    </location>
</feature>
<feature type="helix" evidence="10">
    <location>
        <begin position="531"/>
        <end position="562"/>
    </location>
</feature>
<name>OTOP2_MOUSE</name>
<reference key="1">
    <citation type="submission" date="2003-02" db="EMBL/GenBank/DDBJ databases">
        <title>Mutations in a new protein containing ankyrin repeats and SAM domain cause deafness in Jackson shaker mice, a model for Usher syndrome type IG.</title>
        <authorList>
            <person name="Kikkawa Y."/>
            <person name="Shitara H."/>
            <person name="Kohara Y."/>
            <person name="Takada T."/>
            <person name="Okamoto M."/>
            <person name="Taya C."/>
            <person name="Wakana S."/>
            <person name="Kamiya K."/>
            <person name="Yoshikawa Y."/>
            <person name="Tokano H."/>
            <person name="Kitamura K."/>
            <person name="Shimizu K."/>
            <person name="Shiroishi T."/>
            <person name="Wakabayashi Y."/>
            <person name="Kominami R."/>
            <person name="Yonekawa H."/>
        </authorList>
    </citation>
    <scope>NUCLEOTIDE SEQUENCE [GENOMIC DNA / MRNA]</scope>
    <source>
        <strain>C57BL/6J</strain>
        <tissue>Brain</tissue>
    </source>
</reference>
<reference key="2">
    <citation type="journal article" date="2005" name="Science">
        <title>The transcriptional landscape of the mammalian genome.</title>
        <authorList>
            <person name="Carninci P."/>
            <person name="Kasukawa T."/>
            <person name="Katayama S."/>
            <person name="Gough J."/>
            <person name="Frith M.C."/>
            <person name="Maeda N."/>
            <person name="Oyama R."/>
            <person name="Ravasi T."/>
            <person name="Lenhard B."/>
            <person name="Wells C."/>
            <person name="Kodzius R."/>
            <person name="Shimokawa K."/>
            <person name="Bajic V.B."/>
            <person name="Brenner S.E."/>
            <person name="Batalov S."/>
            <person name="Forrest A.R."/>
            <person name="Zavolan M."/>
            <person name="Davis M.J."/>
            <person name="Wilming L.G."/>
            <person name="Aidinis V."/>
            <person name="Allen J.E."/>
            <person name="Ambesi-Impiombato A."/>
            <person name="Apweiler R."/>
            <person name="Aturaliya R.N."/>
            <person name="Bailey T.L."/>
            <person name="Bansal M."/>
            <person name="Baxter L."/>
            <person name="Beisel K.W."/>
            <person name="Bersano T."/>
            <person name="Bono H."/>
            <person name="Chalk A.M."/>
            <person name="Chiu K.P."/>
            <person name="Choudhary V."/>
            <person name="Christoffels A."/>
            <person name="Clutterbuck D.R."/>
            <person name="Crowe M.L."/>
            <person name="Dalla E."/>
            <person name="Dalrymple B.P."/>
            <person name="de Bono B."/>
            <person name="Della Gatta G."/>
            <person name="di Bernardo D."/>
            <person name="Down T."/>
            <person name="Engstrom P."/>
            <person name="Fagiolini M."/>
            <person name="Faulkner G."/>
            <person name="Fletcher C.F."/>
            <person name="Fukushima T."/>
            <person name="Furuno M."/>
            <person name="Futaki S."/>
            <person name="Gariboldi M."/>
            <person name="Georgii-Hemming P."/>
            <person name="Gingeras T.R."/>
            <person name="Gojobori T."/>
            <person name="Green R.E."/>
            <person name="Gustincich S."/>
            <person name="Harbers M."/>
            <person name="Hayashi Y."/>
            <person name="Hensch T.K."/>
            <person name="Hirokawa N."/>
            <person name="Hill D."/>
            <person name="Huminiecki L."/>
            <person name="Iacono M."/>
            <person name="Ikeo K."/>
            <person name="Iwama A."/>
            <person name="Ishikawa T."/>
            <person name="Jakt M."/>
            <person name="Kanapin A."/>
            <person name="Katoh M."/>
            <person name="Kawasawa Y."/>
            <person name="Kelso J."/>
            <person name="Kitamura H."/>
            <person name="Kitano H."/>
            <person name="Kollias G."/>
            <person name="Krishnan S.P."/>
            <person name="Kruger A."/>
            <person name="Kummerfeld S.K."/>
            <person name="Kurochkin I.V."/>
            <person name="Lareau L.F."/>
            <person name="Lazarevic D."/>
            <person name="Lipovich L."/>
            <person name="Liu J."/>
            <person name="Liuni S."/>
            <person name="McWilliam S."/>
            <person name="Madan Babu M."/>
            <person name="Madera M."/>
            <person name="Marchionni L."/>
            <person name="Matsuda H."/>
            <person name="Matsuzawa S."/>
            <person name="Miki H."/>
            <person name="Mignone F."/>
            <person name="Miyake S."/>
            <person name="Morris K."/>
            <person name="Mottagui-Tabar S."/>
            <person name="Mulder N."/>
            <person name="Nakano N."/>
            <person name="Nakauchi H."/>
            <person name="Ng P."/>
            <person name="Nilsson R."/>
            <person name="Nishiguchi S."/>
            <person name="Nishikawa S."/>
            <person name="Nori F."/>
            <person name="Ohara O."/>
            <person name="Okazaki Y."/>
            <person name="Orlando V."/>
            <person name="Pang K.C."/>
            <person name="Pavan W.J."/>
            <person name="Pavesi G."/>
            <person name="Pesole G."/>
            <person name="Petrovsky N."/>
            <person name="Piazza S."/>
            <person name="Reed J."/>
            <person name="Reid J.F."/>
            <person name="Ring B.Z."/>
            <person name="Ringwald M."/>
            <person name="Rost B."/>
            <person name="Ruan Y."/>
            <person name="Salzberg S.L."/>
            <person name="Sandelin A."/>
            <person name="Schneider C."/>
            <person name="Schoenbach C."/>
            <person name="Sekiguchi K."/>
            <person name="Semple C.A."/>
            <person name="Seno S."/>
            <person name="Sessa L."/>
            <person name="Sheng Y."/>
            <person name="Shibata Y."/>
            <person name="Shimada H."/>
            <person name="Shimada K."/>
            <person name="Silva D."/>
            <person name="Sinclair B."/>
            <person name="Sperling S."/>
            <person name="Stupka E."/>
            <person name="Sugiura K."/>
            <person name="Sultana R."/>
            <person name="Takenaka Y."/>
            <person name="Taki K."/>
            <person name="Tammoja K."/>
            <person name="Tan S.L."/>
            <person name="Tang S."/>
            <person name="Taylor M.S."/>
            <person name="Tegner J."/>
            <person name="Teichmann S.A."/>
            <person name="Ueda H.R."/>
            <person name="van Nimwegen E."/>
            <person name="Verardo R."/>
            <person name="Wei C.L."/>
            <person name="Yagi K."/>
            <person name="Yamanishi H."/>
            <person name="Zabarovsky E."/>
            <person name="Zhu S."/>
            <person name="Zimmer A."/>
            <person name="Hide W."/>
            <person name="Bult C."/>
            <person name="Grimmond S.M."/>
            <person name="Teasdale R.D."/>
            <person name="Liu E.T."/>
            <person name="Brusic V."/>
            <person name="Quackenbush J."/>
            <person name="Wahlestedt C."/>
            <person name="Mattick J.S."/>
            <person name="Hume D.A."/>
            <person name="Kai C."/>
            <person name="Sasaki D."/>
            <person name="Tomaru Y."/>
            <person name="Fukuda S."/>
            <person name="Kanamori-Katayama M."/>
            <person name="Suzuki M."/>
            <person name="Aoki J."/>
            <person name="Arakawa T."/>
            <person name="Iida J."/>
            <person name="Imamura K."/>
            <person name="Itoh M."/>
            <person name="Kato T."/>
            <person name="Kawaji H."/>
            <person name="Kawagashira N."/>
            <person name="Kawashima T."/>
            <person name="Kojima M."/>
            <person name="Kondo S."/>
            <person name="Konno H."/>
            <person name="Nakano K."/>
            <person name="Ninomiya N."/>
            <person name="Nishio T."/>
            <person name="Okada M."/>
            <person name="Plessy C."/>
            <person name="Shibata K."/>
            <person name="Shiraki T."/>
            <person name="Suzuki S."/>
            <person name="Tagami M."/>
            <person name="Waki K."/>
            <person name="Watahiki A."/>
            <person name="Okamura-Oho Y."/>
            <person name="Suzuki H."/>
            <person name="Kawai J."/>
            <person name="Hayashizaki Y."/>
        </authorList>
    </citation>
    <scope>NUCLEOTIDE SEQUENCE [LARGE SCALE MRNA]</scope>
    <source>
        <strain>C57BL/6J</strain>
        <tissue>Skin</tissue>
    </source>
</reference>
<reference key="3">
    <citation type="journal article" date="2009" name="PLoS Biol.">
        <title>Lineage-specific biology revealed by a finished genome assembly of the mouse.</title>
        <authorList>
            <person name="Church D.M."/>
            <person name="Goodstadt L."/>
            <person name="Hillier L.W."/>
            <person name="Zody M.C."/>
            <person name="Goldstein S."/>
            <person name="She X."/>
            <person name="Bult C.J."/>
            <person name="Agarwala R."/>
            <person name="Cherry J.L."/>
            <person name="DiCuccio M."/>
            <person name="Hlavina W."/>
            <person name="Kapustin Y."/>
            <person name="Meric P."/>
            <person name="Maglott D."/>
            <person name="Birtle Z."/>
            <person name="Marques A.C."/>
            <person name="Graves T."/>
            <person name="Zhou S."/>
            <person name="Teague B."/>
            <person name="Potamousis K."/>
            <person name="Churas C."/>
            <person name="Place M."/>
            <person name="Herschleb J."/>
            <person name="Runnheim R."/>
            <person name="Forrest D."/>
            <person name="Amos-Landgraf J."/>
            <person name="Schwartz D.C."/>
            <person name="Cheng Z."/>
            <person name="Lindblad-Toh K."/>
            <person name="Eichler E.E."/>
            <person name="Ponting C.P."/>
        </authorList>
    </citation>
    <scope>NUCLEOTIDE SEQUENCE [LARGE SCALE GENOMIC DNA]</scope>
    <source>
        <strain>C57BL/6J</strain>
    </source>
</reference>
<reference key="4">
    <citation type="journal article" date="2003" name="Hum. Mol. Genet.">
        <title>Non-syndromic vestibular disorder with otoconial agenesis in tilted/mergulhador mice caused by mutations in otopetrin 1.</title>
        <authorList>
            <person name="Hurle B."/>
            <person name="Ignatova E."/>
            <person name="Massironi S.M."/>
            <person name="Mashimo T."/>
            <person name="Rios X."/>
            <person name="Thalmann I."/>
            <person name="Thalmann R."/>
            <person name="Ornitz D.M."/>
        </authorList>
    </citation>
    <scope>IDENTIFICATION</scope>
    <source>
        <strain>C57BL/6J</strain>
    </source>
</reference>
<reference key="5">
    <citation type="journal article" date="2018" name="Science">
        <title>An evolutionarily conserved gene family encodes proton-selective ion channels.</title>
        <authorList>
            <person name="Tu Y.H."/>
            <person name="Cooper A.J."/>
            <person name="Teng B."/>
            <person name="Chang R.B."/>
            <person name="Artiga D.J."/>
            <person name="Turner H.N."/>
            <person name="Mulhall E.M."/>
            <person name="Ye W."/>
            <person name="Smith A.D."/>
            <person name="Liman E.R."/>
        </authorList>
    </citation>
    <scope>FUNCTION</scope>
    <scope>TRANSPORTER ACTIVITY</scope>
    <scope>TISSUE SPECIFICITY</scope>
</reference>
<reference key="6">
    <citation type="journal article" date="2022" name="Elife">
        <title>Structural motifs for subtype-specific pH-sensitive gating of vertebrate otopetrin proton channels.</title>
        <authorList>
            <person name="Teng B."/>
            <person name="Kaplan J.P."/>
            <person name="Liang Z."/>
            <person name="Krieger Z."/>
            <person name="Tu Y.H."/>
            <person name="Burendei B."/>
            <person name="Ward A.B."/>
            <person name="Liman E.R."/>
        </authorList>
    </citation>
    <scope>FUNCTION</scope>
    <scope>TRANSPORTER ACTIVITY</scope>
</reference>
<reference key="7">
    <citation type="journal article" date="2023" name="Elife">
        <title>Zinc activation of OTOP proton channels identifies structural elements of the gating apparatus.</title>
        <authorList>
            <person name="Teng B."/>
            <person name="Kaplan J.P."/>
            <person name="Liang Z."/>
            <person name="Chyung K.S."/>
            <person name="Goldschen-Ohm M.P."/>
            <person name="Liman E.R."/>
        </authorList>
    </citation>
    <scope>FUNCTION</scope>
    <scope>TRANSPORTER ACTIVITY</scope>
    <scope>ACTIVITY REGULATION</scope>
</reference>
<keyword id="KW-0002">3D-structure</keyword>
<keyword id="KW-1003">Cell membrane</keyword>
<keyword id="KW-0375">Hydrogen ion transport</keyword>
<keyword id="KW-0407">Ion channel</keyword>
<keyword id="KW-0406">Ion transport</keyword>
<keyword id="KW-0472">Membrane</keyword>
<keyword id="KW-1185">Reference proteome</keyword>
<keyword id="KW-0812">Transmembrane</keyword>
<keyword id="KW-1133">Transmembrane helix</keyword>
<keyword id="KW-0813">Transport</keyword>
<accession>Q80SX5</accession>
<accession>Q8CE77</accession>
<sequence>MSEELVPHPNESLPGPRASPREVWKKGGRLLSVLLAVNVLLLACTLISGGAFNKVAVYDTDVFALLTTMMLLAALWIVFYLLRTARCPDAVPYRDAHAGPIWLRGGLVLFGICTLVMDVFKTGYYSSFFECQSAIKILHPIIQAVFVIVQTYFLWISAKDCIHTHLDLTRCGLMFTLATNLAIWMAAVVDESVHQAHSYSGSHGNTSHTRLNPDSKRAGGAAEEDPCLCSTAICQIFQQGYFYLYPFNIEYSLFASTMLYVMWKNVGRLLASTHGHGHTPSRVSLFRETFFAGPVLGLLLFVVGLAVFILYEVQVSGERGHTRQALVIYYSFNIVCLGLMTLVSLSGSVIYRFDRRAMDHHKNPTRTLDVALLMGAALGQYAISYYSIVAVVVGSPRDLQGALNLSHALLMIAQHTFQNVFIIESLHRGPPGAEPREMPPKEPCQGITFANLDAIRTLPSCPPTPRLVIPNLESPQEAVAIISAPRCHWRRRCLKDISLFLLLCNVILWIMPAFGARPHFSNTVEVDFYGYSLWAAIVNICLPFGIFYRMHAVSSLLEVYVLS</sequence>
<protein>
    <recommendedName>
        <fullName evidence="8">Proton channel OTOP2</fullName>
    </recommendedName>
    <alternativeName>
        <fullName evidence="7">Otopetrin-2</fullName>
    </alternativeName>
</protein>
<evidence type="ECO:0000250" key="1">
    <source>
        <dbReference type="UniProtKB" id="Q80VM9"/>
    </source>
</evidence>
<evidence type="ECO:0000255" key="2"/>
<evidence type="ECO:0000256" key="3">
    <source>
        <dbReference type="SAM" id="MobiDB-lite"/>
    </source>
</evidence>
<evidence type="ECO:0000269" key="4">
    <source>
    </source>
</evidence>
<evidence type="ECO:0000269" key="5">
    <source>
    </source>
</evidence>
<evidence type="ECO:0000269" key="6">
    <source>
    </source>
</evidence>
<evidence type="ECO:0000303" key="7">
    <source>
    </source>
</evidence>
<evidence type="ECO:0000305" key="8"/>
<evidence type="ECO:0000312" key="9">
    <source>
        <dbReference type="MGI" id="MGI:2388365"/>
    </source>
</evidence>
<evidence type="ECO:0007829" key="10">
    <source>
        <dbReference type="PDB" id="8UG7"/>
    </source>
</evidence>
<evidence type="ECO:0007829" key="11">
    <source>
        <dbReference type="PDB" id="8UGA"/>
    </source>
</evidence>
<proteinExistence type="evidence at protein level"/>
<comment type="function">
    <text evidence="4 5 6">Proton-selective ion channel open at neutral pH (PubMed:29371428, PubMed:35920807, PubMed:37053086). Actives at neutral and alkaline extracellular pH, likely participates in some alkali-related physiological activities (PubMed:35920807, PubMed:37053086).</text>
</comment>
<comment type="catalytic activity">
    <reaction evidence="4 5 6">
        <text>H(+)(in) = H(+)(out)</text>
        <dbReference type="Rhea" id="RHEA:34979"/>
        <dbReference type="ChEBI" id="CHEBI:15378"/>
    </reaction>
</comment>
<comment type="activity regulation">
    <text evidence="5 6">Actives at neutral and alkaline extracellular pH, acid extracellular pH appears to inhibit the channel (PubMed:35920807). Insensitive to activation by Zn(2+) (PubMed:37053086).</text>
</comment>
<comment type="subcellular location">
    <subcellularLocation>
        <location evidence="1">Cell membrane</location>
        <topology evidence="2">Multi-pass membrane protein</topology>
    </subcellularLocation>
</comment>
<comment type="tissue specificity">
    <text evidence="4">Expressed at higher level in stomach, testis and olfactory bulb.</text>
</comment>
<comment type="similarity">
    <text evidence="8">Belongs to the otopetrin family.</text>
</comment>
<organism>
    <name type="scientific">Mus musculus</name>
    <name type="common">Mouse</name>
    <dbReference type="NCBI Taxonomy" id="10090"/>
    <lineage>
        <taxon>Eukaryota</taxon>
        <taxon>Metazoa</taxon>
        <taxon>Chordata</taxon>
        <taxon>Craniata</taxon>
        <taxon>Vertebrata</taxon>
        <taxon>Euteleostomi</taxon>
        <taxon>Mammalia</taxon>
        <taxon>Eutheria</taxon>
        <taxon>Euarchontoglires</taxon>
        <taxon>Glires</taxon>
        <taxon>Rodentia</taxon>
        <taxon>Myomorpha</taxon>
        <taxon>Muroidea</taxon>
        <taxon>Muridae</taxon>
        <taxon>Murinae</taxon>
        <taxon>Mus</taxon>
        <taxon>Mus</taxon>
    </lineage>
</organism>
<gene>
    <name evidence="7 9" type="primary">Otop2</name>
</gene>
<dbReference type="EMBL" id="AB087501">
    <property type="protein sequence ID" value="BAC57427.1"/>
    <property type="molecule type" value="Genomic_DNA"/>
</dbReference>
<dbReference type="EMBL" id="AB087504">
    <property type="protein sequence ID" value="BAC67684.1"/>
    <property type="molecule type" value="mRNA"/>
</dbReference>
<dbReference type="EMBL" id="AK028866">
    <property type="protein sequence ID" value="BAC26159.1"/>
    <property type="molecule type" value="mRNA"/>
</dbReference>
<dbReference type="EMBL" id="AL603828">
    <property type="status" value="NOT_ANNOTATED_CDS"/>
    <property type="molecule type" value="Genomic_DNA"/>
</dbReference>
<dbReference type="EMBL" id="BK000629">
    <property type="protein sequence ID" value="DAA00891.1"/>
    <property type="molecule type" value="Genomic_DNA"/>
</dbReference>
<dbReference type="EMBL" id="BK000631">
    <property type="protein sequence ID" value="DAA00893.1"/>
    <property type="molecule type" value="mRNA"/>
</dbReference>
<dbReference type="EMBL" id="BK000632">
    <property type="protein sequence ID" value="DAA00894.1"/>
    <property type="molecule type" value="mRNA"/>
</dbReference>
<dbReference type="CCDS" id="CCDS25628.1"/>
<dbReference type="RefSeq" id="NP_001349329.1">
    <property type="nucleotide sequence ID" value="NM_001362400.1"/>
</dbReference>
<dbReference type="RefSeq" id="NP_766389.2">
    <property type="nucleotide sequence ID" value="NM_172801.2"/>
</dbReference>
<dbReference type="RefSeq" id="XP_006533319.1">
    <property type="nucleotide sequence ID" value="XM_006533256.1"/>
</dbReference>
<dbReference type="RefSeq" id="XP_030101838.1">
    <property type="nucleotide sequence ID" value="XM_030245978.2"/>
</dbReference>
<dbReference type="RefSeq" id="XP_036012569.1">
    <property type="nucleotide sequence ID" value="XM_036156676.1"/>
</dbReference>
<dbReference type="PDB" id="8UG6">
    <property type="method" value="EM"/>
    <property type="resolution" value="3.06 A"/>
    <property type="chains" value="A/B=1-563"/>
</dbReference>
<dbReference type="PDB" id="8UG7">
    <property type="method" value="EM"/>
    <property type="resolution" value="2.95 A"/>
    <property type="chains" value="A/B=1-563"/>
</dbReference>
<dbReference type="PDB" id="8UG8">
    <property type="method" value="EM"/>
    <property type="resolution" value="3.79 A"/>
    <property type="chains" value="A/B=1-563"/>
</dbReference>
<dbReference type="PDB" id="8UGA">
    <property type="method" value="EM"/>
    <property type="resolution" value="3.12 A"/>
    <property type="chains" value="A/B=1-563"/>
</dbReference>
<dbReference type="PDBsum" id="8UG6"/>
<dbReference type="PDBsum" id="8UG7"/>
<dbReference type="PDBsum" id="8UG8"/>
<dbReference type="PDBsum" id="8UGA"/>
<dbReference type="EMDB" id="EMD-42215"/>
<dbReference type="EMDB" id="EMD-42216"/>
<dbReference type="EMDB" id="EMD-42217"/>
<dbReference type="EMDB" id="EMD-42219"/>
<dbReference type="SMR" id="Q80SX5"/>
<dbReference type="FunCoup" id="Q80SX5">
    <property type="interactions" value="68"/>
</dbReference>
<dbReference type="STRING" id="10090.ENSMUSP00000062109"/>
<dbReference type="PhosphoSitePlus" id="Q80SX5"/>
<dbReference type="PaxDb" id="10090-ENSMUSP00000062109"/>
<dbReference type="ProteomicsDB" id="294351"/>
<dbReference type="Antibodypedia" id="32060">
    <property type="antibodies" value="100 antibodies from 16 providers"/>
</dbReference>
<dbReference type="DNASU" id="237987"/>
<dbReference type="Ensembl" id="ENSMUST00000055490.9">
    <property type="protein sequence ID" value="ENSMUSP00000062109.3"/>
    <property type="gene ID" value="ENSMUSG00000050201.10"/>
</dbReference>
<dbReference type="Ensembl" id="ENSMUST00000106544.2">
    <property type="protein sequence ID" value="ENSMUSP00000102154.2"/>
    <property type="gene ID" value="ENSMUSG00000050201.10"/>
</dbReference>
<dbReference type="GeneID" id="237987"/>
<dbReference type="KEGG" id="mmu:237987"/>
<dbReference type="UCSC" id="uc007mhb.1">
    <property type="organism name" value="mouse"/>
</dbReference>
<dbReference type="AGR" id="MGI:2388365"/>
<dbReference type="CTD" id="92736"/>
<dbReference type="MGI" id="MGI:2388365">
    <property type="gene designation" value="Otop2"/>
</dbReference>
<dbReference type="VEuPathDB" id="HostDB:ENSMUSG00000050201"/>
<dbReference type="eggNOG" id="KOG4740">
    <property type="taxonomic scope" value="Eukaryota"/>
</dbReference>
<dbReference type="GeneTree" id="ENSGT00940000156691"/>
<dbReference type="HOGENOM" id="CLU_032913_0_0_1"/>
<dbReference type="InParanoid" id="Q80SX5"/>
<dbReference type="OMA" id="DGFLITC"/>
<dbReference type="OrthoDB" id="6429739at2759"/>
<dbReference type="PhylomeDB" id="Q80SX5"/>
<dbReference type="TreeFam" id="TF313428"/>
<dbReference type="BioGRID-ORCS" id="237987">
    <property type="hits" value="3 hits in 77 CRISPR screens"/>
</dbReference>
<dbReference type="PRO" id="PR:Q80SX5"/>
<dbReference type="Proteomes" id="UP000000589">
    <property type="component" value="Chromosome 11"/>
</dbReference>
<dbReference type="RNAct" id="Q80SX5">
    <property type="molecule type" value="protein"/>
</dbReference>
<dbReference type="Bgee" id="ENSMUSG00000050201">
    <property type="expression patterns" value="Expressed in esophagus and 12 other cell types or tissues"/>
</dbReference>
<dbReference type="GO" id="GO:0005886">
    <property type="term" value="C:plasma membrane"/>
    <property type="evidence" value="ECO:0007669"/>
    <property type="project" value="UniProtKB-SubCell"/>
</dbReference>
<dbReference type="GO" id="GO:0015252">
    <property type="term" value="F:proton channel activity"/>
    <property type="evidence" value="ECO:0000314"/>
    <property type="project" value="UniProtKB"/>
</dbReference>
<dbReference type="GO" id="GO:1902600">
    <property type="term" value="P:proton transmembrane transport"/>
    <property type="evidence" value="ECO:0000314"/>
    <property type="project" value="UniProtKB"/>
</dbReference>
<dbReference type="InterPro" id="IPR004878">
    <property type="entry name" value="Otopetrin"/>
</dbReference>
<dbReference type="PANTHER" id="PTHR21522">
    <property type="entry name" value="PROTON CHANNEL OTOP"/>
    <property type="match status" value="1"/>
</dbReference>
<dbReference type="PANTHER" id="PTHR21522:SF35">
    <property type="entry name" value="PROTON CHANNEL OTOP2"/>
    <property type="match status" value="1"/>
</dbReference>
<dbReference type="Pfam" id="PF03189">
    <property type="entry name" value="Otopetrin"/>
    <property type="match status" value="3"/>
</dbReference>